<name>TRPB_POLNA</name>
<feature type="chain" id="PRO_1000076399" description="Tryptophan synthase beta chain">
    <location>
        <begin position="1"/>
        <end position="434"/>
    </location>
</feature>
<feature type="region of interest" description="Disordered" evidence="2">
    <location>
        <begin position="411"/>
        <end position="434"/>
    </location>
</feature>
<feature type="modified residue" description="N6-(pyridoxal phosphate)lysine" evidence="1">
    <location>
        <position position="92"/>
    </location>
</feature>
<gene>
    <name evidence="1" type="primary">trpB</name>
    <name type="ordered locus">Pnap_3046</name>
</gene>
<organism>
    <name type="scientific">Polaromonas naphthalenivorans (strain CJ2)</name>
    <dbReference type="NCBI Taxonomy" id="365044"/>
    <lineage>
        <taxon>Bacteria</taxon>
        <taxon>Pseudomonadati</taxon>
        <taxon>Pseudomonadota</taxon>
        <taxon>Betaproteobacteria</taxon>
        <taxon>Burkholderiales</taxon>
        <taxon>Comamonadaceae</taxon>
        <taxon>Polaromonas</taxon>
    </lineage>
</organism>
<comment type="function">
    <text evidence="1">The beta subunit is responsible for the synthesis of L-tryptophan from indole and L-serine.</text>
</comment>
<comment type="catalytic activity">
    <reaction evidence="1">
        <text>(1S,2R)-1-C-(indol-3-yl)glycerol 3-phosphate + L-serine = D-glyceraldehyde 3-phosphate + L-tryptophan + H2O</text>
        <dbReference type="Rhea" id="RHEA:10532"/>
        <dbReference type="ChEBI" id="CHEBI:15377"/>
        <dbReference type="ChEBI" id="CHEBI:33384"/>
        <dbReference type="ChEBI" id="CHEBI:57912"/>
        <dbReference type="ChEBI" id="CHEBI:58866"/>
        <dbReference type="ChEBI" id="CHEBI:59776"/>
        <dbReference type="EC" id="4.2.1.20"/>
    </reaction>
</comment>
<comment type="cofactor">
    <cofactor evidence="1">
        <name>pyridoxal 5'-phosphate</name>
        <dbReference type="ChEBI" id="CHEBI:597326"/>
    </cofactor>
</comment>
<comment type="pathway">
    <text evidence="1">Amino-acid biosynthesis; L-tryptophan biosynthesis; L-tryptophan from chorismate: step 5/5.</text>
</comment>
<comment type="subunit">
    <text evidence="1">Tetramer of two alpha and two beta chains.</text>
</comment>
<comment type="similarity">
    <text evidence="1">Belongs to the TrpB family.</text>
</comment>
<dbReference type="EC" id="4.2.1.20" evidence="1"/>
<dbReference type="EMBL" id="CP000529">
    <property type="protein sequence ID" value="ABM38345.1"/>
    <property type="molecule type" value="Genomic_DNA"/>
</dbReference>
<dbReference type="RefSeq" id="WP_011802417.1">
    <property type="nucleotide sequence ID" value="NC_008781.1"/>
</dbReference>
<dbReference type="SMR" id="A1VRR7"/>
<dbReference type="STRING" id="365044.Pnap_3046"/>
<dbReference type="KEGG" id="pna:Pnap_3046"/>
<dbReference type="eggNOG" id="COG0133">
    <property type="taxonomic scope" value="Bacteria"/>
</dbReference>
<dbReference type="HOGENOM" id="CLU_016734_3_1_4"/>
<dbReference type="OrthoDB" id="9766131at2"/>
<dbReference type="UniPathway" id="UPA00035">
    <property type="reaction ID" value="UER00044"/>
</dbReference>
<dbReference type="Proteomes" id="UP000000644">
    <property type="component" value="Chromosome"/>
</dbReference>
<dbReference type="GO" id="GO:0005737">
    <property type="term" value="C:cytoplasm"/>
    <property type="evidence" value="ECO:0007669"/>
    <property type="project" value="TreeGrafter"/>
</dbReference>
<dbReference type="GO" id="GO:0004834">
    <property type="term" value="F:tryptophan synthase activity"/>
    <property type="evidence" value="ECO:0007669"/>
    <property type="project" value="UniProtKB-UniRule"/>
</dbReference>
<dbReference type="CDD" id="cd06446">
    <property type="entry name" value="Trp-synth_B"/>
    <property type="match status" value="1"/>
</dbReference>
<dbReference type="FunFam" id="3.40.50.1100:FF:000001">
    <property type="entry name" value="Tryptophan synthase beta chain"/>
    <property type="match status" value="1"/>
</dbReference>
<dbReference type="FunFam" id="3.40.50.1100:FF:000004">
    <property type="entry name" value="Tryptophan synthase beta chain"/>
    <property type="match status" value="1"/>
</dbReference>
<dbReference type="Gene3D" id="3.40.50.1100">
    <property type="match status" value="2"/>
</dbReference>
<dbReference type="HAMAP" id="MF_00133">
    <property type="entry name" value="Trp_synth_beta"/>
    <property type="match status" value="1"/>
</dbReference>
<dbReference type="InterPro" id="IPR006653">
    <property type="entry name" value="Trp_synth_b_CS"/>
</dbReference>
<dbReference type="InterPro" id="IPR006654">
    <property type="entry name" value="Trp_synth_beta"/>
</dbReference>
<dbReference type="InterPro" id="IPR023026">
    <property type="entry name" value="Trp_synth_beta/beta-like"/>
</dbReference>
<dbReference type="InterPro" id="IPR001926">
    <property type="entry name" value="TrpB-like_PALP"/>
</dbReference>
<dbReference type="InterPro" id="IPR036052">
    <property type="entry name" value="TrpB-like_PALP_sf"/>
</dbReference>
<dbReference type="NCBIfam" id="TIGR00263">
    <property type="entry name" value="trpB"/>
    <property type="match status" value="1"/>
</dbReference>
<dbReference type="PANTHER" id="PTHR48077:SF3">
    <property type="entry name" value="TRYPTOPHAN SYNTHASE"/>
    <property type="match status" value="1"/>
</dbReference>
<dbReference type="PANTHER" id="PTHR48077">
    <property type="entry name" value="TRYPTOPHAN SYNTHASE-RELATED"/>
    <property type="match status" value="1"/>
</dbReference>
<dbReference type="Pfam" id="PF00291">
    <property type="entry name" value="PALP"/>
    <property type="match status" value="1"/>
</dbReference>
<dbReference type="PIRSF" id="PIRSF001413">
    <property type="entry name" value="Trp_syn_beta"/>
    <property type="match status" value="1"/>
</dbReference>
<dbReference type="SUPFAM" id="SSF53686">
    <property type="entry name" value="Tryptophan synthase beta subunit-like PLP-dependent enzymes"/>
    <property type="match status" value="1"/>
</dbReference>
<dbReference type="PROSITE" id="PS00168">
    <property type="entry name" value="TRP_SYNTHASE_BETA"/>
    <property type="match status" value="1"/>
</dbReference>
<sequence length="434" mass="46763">MYDYHQPDLAGHFGIYGGSFVSETLTHAINELKDAYARYQNDPKFLAEFNYELKHFVGRPSPIYHAARMSREQGGAQIYLKREDLNHTGAHKINNTIGQAMLARRMGKQRIIAETGAGQHGVATATICARYGLECVVYMGSEDVKRQSPNVYRMNLLGATVVPVESGSKTLKDALNEAMRDWVANVDNTFYIIGTVAGPHPYPMMVRDFQSVIGTECLSQMPEMNAGRQPDAVVACVGGGSNAMGIFHPYIAHENTRLIGVEAAGEGLDSGKHSASLQRGLPGVLHGNRTYVLQNDDGQVTETHSISAGLDYPGVGPEHAYLKDIGRAEYVGITDTEALQAFHYLCRTEGIIPALESAHAVAYAMKLAKTMRSDQSILVNLSGRGDKDIGTVADLSGADFYDRPSMRGLGVKGGVATSPESFDASGAKGAGSQS</sequence>
<evidence type="ECO:0000255" key="1">
    <source>
        <dbReference type="HAMAP-Rule" id="MF_00133"/>
    </source>
</evidence>
<evidence type="ECO:0000256" key="2">
    <source>
        <dbReference type="SAM" id="MobiDB-lite"/>
    </source>
</evidence>
<accession>A1VRR7</accession>
<proteinExistence type="inferred from homology"/>
<reference key="1">
    <citation type="journal article" date="2009" name="Environ. Microbiol.">
        <title>The genome of Polaromonas naphthalenivorans strain CJ2, isolated from coal tar-contaminated sediment, reveals physiological and metabolic versatility and evolution through extensive horizontal gene transfer.</title>
        <authorList>
            <person name="Yagi J.M."/>
            <person name="Sims D."/>
            <person name="Brettin T."/>
            <person name="Bruce D."/>
            <person name="Madsen E.L."/>
        </authorList>
    </citation>
    <scope>NUCLEOTIDE SEQUENCE [LARGE SCALE GENOMIC DNA]</scope>
    <source>
        <strain>CJ2</strain>
    </source>
</reference>
<keyword id="KW-0028">Amino-acid biosynthesis</keyword>
<keyword id="KW-0057">Aromatic amino acid biosynthesis</keyword>
<keyword id="KW-0456">Lyase</keyword>
<keyword id="KW-0663">Pyridoxal phosphate</keyword>
<keyword id="KW-1185">Reference proteome</keyword>
<keyword id="KW-0822">Tryptophan biosynthesis</keyword>
<protein>
    <recommendedName>
        <fullName evidence="1">Tryptophan synthase beta chain</fullName>
        <ecNumber evidence="1">4.2.1.20</ecNumber>
    </recommendedName>
</protein>